<comment type="function">
    <text evidence="1">Fluoride-specific ion channel. Important for reducing fluoride concentration in the cell, thus reducing its toxicity.</text>
</comment>
<comment type="catalytic activity">
    <reaction evidence="1">
        <text>fluoride(in) = fluoride(out)</text>
        <dbReference type="Rhea" id="RHEA:76159"/>
        <dbReference type="ChEBI" id="CHEBI:17051"/>
    </reaction>
    <physiologicalReaction direction="left-to-right" evidence="1">
        <dbReference type="Rhea" id="RHEA:76160"/>
    </physiologicalReaction>
</comment>
<comment type="activity regulation">
    <text evidence="1">Na(+) is not transported, but it plays an essential structural role and its presence is essential for fluoride channel function.</text>
</comment>
<comment type="subcellular location">
    <subcellularLocation>
        <location evidence="1">Cell membrane</location>
        <topology evidence="1">Multi-pass membrane protein</topology>
    </subcellularLocation>
</comment>
<comment type="similarity">
    <text evidence="1">Belongs to the fluoride channel Fluc/FEX (TC 1.A.43) family.</text>
</comment>
<sequence length="129" mass="13952">MYFLYVGVFGALGGMCRYAMNLWLGGGDFPSATLAVNLIGCFLLAFLMRFLAEKSRVSLVLLNGIGTGFIGAFTTFSAFSVDTIQLVQSGAWLFAVSYVLASFIGGLIMVKFGRMLSNKLLNRGEHRVG</sequence>
<name>FLUC2_LISMO</name>
<gene>
    <name evidence="1" type="primary">fluC2</name>
    <name evidence="1" type="synonym">crcB2</name>
    <name type="ordered locus">lmo2082</name>
</gene>
<dbReference type="EMBL" id="AL591982">
    <property type="protein sequence ID" value="CAD00160.1"/>
    <property type="molecule type" value="Genomic_DNA"/>
</dbReference>
<dbReference type="PIR" id="AB1335">
    <property type="entry name" value="AB1335"/>
</dbReference>
<dbReference type="RefSeq" id="NP_465606.1">
    <property type="nucleotide sequence ID" value="NC_003210.1"/>
</dbReference>
<dbReference type="SMR" id="Q8Y5I0"/>
<dbReference type="STRING" id="169963.gene:17594767"/>
<dbReference type="PaxDb" id="169963-lmo2082"/>
<dbReference type="EnsemblBacteria" id="CAD00160">
    <property type="protein sequence ID" value="CAD00160"/>
    <property type="gene ID" value="CAD00160"/>
</dbReference>
<dbReference type="GeneID" id="984773"/>
<dbReference type="KEGG" id="lmo:lmo2082"/>
<dbReference type="PATRIC" id="fig|169963.11.peg.2132"/>
<dbReference type="eggNOG" id="COG0239">
    <property type="taxonomic scope" value="Bacteria"/>
</dbReference>
<dbReference type="HOGENOM" id="CLU_114342_1_2_9"/>
<dbReference type="OrthoDB" id="9799631at2"/>
<dbReference type="PhylomeDB" id="Q8Y5I0"/>
<dbReference type="BioCyc" id="LMON169963:LMO2082-MONOMER"/>
<dbReference type="Proteomes" id="UP000000817">
    <property type="component" value="Chromosome"/>
</dbReference>
<dbReference type="GO" id="GO:0005886">
    <property type="term" value="C:plasma membrane"/>
    <property type="evidence" value="ECO:0000318"/>
    <property type="project" value="GO_Central"/>
</dbReference>
<dbReference type="GO" id="GO:0062054">
    <property type="term" value="F:fluoride channel activity"/>
    <property type="evidence" value="ECO:0007669"/>
    <property type="project" value="UniProtKB-UniRule"/>
</dbReference>
<dbReference type="GO" id="GO:1903425">
    <property type="term" value="F:fluoride transmembrane transporter activity"/>
    <property type="evidence" value="ECO:0000318"/>
    <property type="project" value="GO_Central"/>
</dbReference>
<dbReference type="GO" id="GO:0046872">
    <property type="term" value="F:metal ion binding"/>
    <property type="evidence" value="ECO:0007669"/>
    <property type="project" value="UniProtKB-KW"/>
</dbReference>
<dbReference type="GO" id="GO:0140114">
    <property type="term" value="P:cellular detoxification of fluoride"/>
    <property type="evidence" value="ECO:0007669"/>
    <property type="project" value="UniProtKB-UniRule"/>
</dbReference>
<dbReference type="GO" id="GO:1903424">
    <property type="term" value="P:fluoride transmembrane transport"/>
    <property type="evidence" value="ECO:0000318"/>
    <property type="project" value="GO_Central"/>
</dbReference>
<dbReference type="HAMAP" id="MF_00454">
    <property type="entry name" value="FluC"/>
    <property type="match status" value="1"/>
</dbReference>
<dbReference type="InterPro" id="IPR003691">
    <property type="entry name" value="FluC"/>
</dbReference>
<dbReference type="NCBIfam" id="TIGR00494">
    <property type="entry name" value="crcB"/>
    <property type="match status" value="1"/>
</dbReference>
<dbReference type="NCBIfam" id="NF010827">
    <property type="entry name" value="PRK14231.1"/>
    <property type="match status" value="1"/>
</dbReference>
<dbReference type="PANTHER" id="PTHR28259">
    <property type="entry name" value="FLUORIDE EXPORT PROTEIN 1-RELATED"/>
    <property type="match status" value="1"/>
</dbReference>
<dbReference type="PANTHER" id="PTHR28259:SF1">
    <property type="entry name" value="FLUORIDE EXPORT PROTEIN 1-RELATED"/>
    <property type="match status" value="1"/>
</dbReference>
<dbReference type="Pfam" id="PF02537">
    <property type="entry name" value="CRCB"/>
    <property type="match status" value="1"/>
</dbReference>
<organism>
    <name type="scientific">Listeria monocytogenes serovar 1/2a (strain ATCC BAA-679 / EGD-e)</name>
    <dbReference type="NCBI Taxonomy" id="169963"/>
    <lineage>
        <taxon>Bacteria</taxon>
        <taxon>Bacillati</taxon>
        <taxon>Bacillota</taxon>
        <taxon>Bacilli</taxon>
        <taxon>Bacillales</taxon>
        <taxon>Listeriaceae</taxon>
        <taxon>Listeria</taxon>
    </lineage>
</organism>
<protein>
    <recommendedName>
        <fullName evidence="1">Fluoride-specific ion channel FluC 2</fullName>
    </recommendedName>
</protein>
<reference key="1">
    <citation type="journal article" date="2001" name="Science">
        <title>Comparative genomics of Listeria species.</title>
        <authorList>
            <person name="Glaser P."/>
            <person name="Frangeul L."/>
            <person name="Buchrieser C."/>
            <person name="Rusniok C."/>
            <person name="Amend A."/>
            <person name="Baquero F."/>
            <person name="Berche P."/>
            <person name="Bloecker H."/>
            <person name="Brandt P."/>
            <person name="Chakraborty T."/>
            <person name="Charbit A."/>
            <person name="Chetouani F."/>
            <person name="Couve E."/>
            <person name="de Daruvar A."/>
            <person name="Dehoux P."/>
            <person name="Domann E."/>
            <person name="Dominguez-Bernal G."/>
            <person name="Duchaud E."/>
            <person name="Durant L."/>
            <person name="Dussurget O."/>
            <person name="Entian K.-D."/>
            <person name="Fsihi H."/>
            <person name="Garcia-del Portillo F."/>
            <person name="Garrido P."/>
            <person name="Gautier L."/>
            <person name="Goebel W."/>
            <person name="Gomez-Lopez N."/>
            <person name="Hain T."/>
            <person name="Hauf J."/>
            <person name="Jackson D."/>
            <person name="Jones L.-M."/>
            <person name="Kaerst U."/>
            <person name="Kreft J."/>
            <person name="Kuhn M."/>
            <person name="Kunst F."/>
            <person name="Kurapkat G."/>
            <person name="Madueno E."/>
            <person name="Maitournam A."/>
            <person name="Mata Vicente J."/>
            <person name="Ng E."/>
            <person name="Nedjari H."/>
            <person name="Nordsiek G."/>
            <person name="Novella S."/>
            <person name="de Pablos B."/>
            <person name="Perez-Diaz J.-C."/>
            <person name="Purcell R."/>
            <person name="Remmel B."/>
            <person name="Rose M."/>
            <person name="Schlueter T."/>
            <person name="Simoes N."/>
            <person name="Tierrez A."/>
            <person name="Vazquez-Boland J.-A."/>
            <person name="Voss H."/>
            <person name="Wehland J."/>
            <person name="Cossart P."/>
        </authorList>
    </citation>
    <scope>NUCLEOTIDE SEQUENCE [LARGE SCALE GENOMIC DNA]</scope>
    <source>
        <strain>ATCC BAA-679 / EGD-e</strain>
    </source>
</reference>
<feature type="chain" id="PRO_0000110130" description="Fluoride-specific ion channel FluC 2">
    <location>
        <begin position="1"/>
        <end position="129"/>
    </location>
</feature>
<feature type="transmembrane region" description="Helical" evidence="1">
    <location>
        <begin position="3"/>
        <end position="23"/>
    </location>
</feature>
<feature type="transmembrane region" description="Helical" evidence="1">
    <location>
        <begin position="32"/>
        <end position="52"/>
    </location>
</feature>
<feature type="transmembrane region" description="Helical" evidence="1">
    <location>
        <begin position="59"/>
        <end position="79"/>
    </location>
</feature>
<feature type="transmembrane region" description="Helical" evidence="1">
    <location>
        <begin position="90"/>
        <end position="110"/>
    </location>
</feature>
<feature type="binding site" evidence="1">
    <location>
        <position position="71"/>
    </location>
    <ligand>
        <name>Na(+)</name>
        <dbReference type="ChEBI" id="CHEBI:29101"/>
        <note>structural</note>
    </ligand>
</feature>
<feature type="binding site" evidence="1">
    <location>
        <position position="74"/>
    </location>
    <ligand>
        <name>Na(+)</name>
        <dbReference type="ChEBI" id="CHEBI:29101"/>
        <note>structural</note>
    </ligand>
</feature>
<keyword id="KW-1003">Cell membrane</keyword>
<keyword id="KW-0407">Ion channel</keyword>
<keyword id="KW-0406">Ion transport</keyword>
<keyword id="KW-0472">Membrane</keyword>
<keyword id="KW-0479">Metal-binding</keyword>
<keyword id="KW-1185">Reference proteome</keyword>
<keyword id="KW-0915">Sodium</keyword>
<keyword id="KW-0812">Transmembrane</keyword>
<keyword id="KW-1133">Transmembrane helix</keyword>
<keyword id="KW-0813">Transport</keyword>
<evidence type="ECO:0000255" key="1">
    <source>
        <dbReference type="HAMAP-Rule" id="MF_00454"/>
    </source>
</evidence>
<accession>Q8Y5I0</accession>
<proteinExistence type="inferred from homology"/>